<comment type="function">
    <text evidence="1">Catalyzes the conversion of glucosamine-6-phosphate to glucosamine-1-phosphate.</text>
</comment>
<comment type="catalytic activity">
    <reaction evidence="1">
        <text>alpha-D-glucosamine 1-phosphate = D-glucosamine 6-phosphate</text>
        <dbReference type="Rhea" id="RHEA:23424"/>
        <dbReference type="ChEBI" id="CHEBI:58516"/>
        <dbReference type="ChEBI" id="CHEBI:58725"/>
        <dbReference type="EC" id="5.4.2.10"/>
    </reaction>
</comment>
<comment type="cofactor">
    <cofactor evidence="1">
        <name>Mg(2+)</name>
        <dbReference type="ChEBI" id="CHEBI:18420"/>
    </cofactor>
    <text evidence="1">Binds 1 Mg(2+) ion per subunit.</text>
</comment>
<comment type="PTM">
    <text evidence="1">Activated by phosphorylation.</text>
</comment>
<comment type="similarity">
    <text evidence="1">Belongs to the phosphohexose mutase family.</text>
</comment>
<name>GLMM_HISS2</name>
<gene>
    <name evidence="1" type="primary">glmM</name>
    <name type="ordered locus">HSM_1197</name>
</gene>
<keyword id="KW-0413">Isomerase</keyword>
<keyword id="KW-0460">Magnesium</keyword>
<keyword id="KW-0479">Metal-binding</keyword>
<keyword id="KW-0597">Phosphoprotein</keyword>
<dbReference type="EC" id="5.4.2.10" evidence="1"/>
<dbReference type="EMBL" id="CP000947">
    <property type="protein sequence ID" value="ACA30919.1"/>
    <property type="molecule type" value="Genomic_DNA"/>
</dbReference>
<dbReference type="RefSeq" id="WP_012340374.1">
    <property type="nucleotide sequence ID" value="NC_010519.1"/>
</dbReference>
<dbReference type="SMR" id="B0UTS2"/>
<dbReference type="STRING" id="228400.HSM_1197"/>
<dbReference type="GeneID" id="31487500"/>
<dbReference type="KEGG" id="hsm:HSM_1197"/>
<dbReference type="HOGENOM" id="CLU_016950_7_0_6"/>
<dbReference type="GO" id="GO:0005829">
    <property type="term" value="C:cytosol"/>
    <property type="evidence" value="ECO:0007669"/>
    <property type="project" value="TreeGrafter"/>
</dbReference>
<dbReference type="GO" id="GO:0000287">
    <property type="term" value="F:magnesium ion binding"/>
    <property type="evidence" value="ECO:0007669"/>
    <property type="project" value="UniProtKB-UniRule"/>
</dbReference>
<dbReference type="GO" id="GO:0008966">
    <property type="term" value="F:phosphoglucosamine mutase activity"/>
    <property type="evidence" value="ECO:0007669"/>
    <property type="project" value="UniProtKB-UniRule"/>
</dbReference>
<dbReference type="GO" id="GO:0004615">
    <property type="term" value="F:phosphomannomutase activity"/>
    <property type="evidence" value="ECO:0007669"/>
    <property type="project" value="TreeGrafter"/>
</dbReference>
<dbReference type="GO" id="GO:0005975">
    <property type="term" value="P:carbohydrate metabolic process"/>
    <property type="evidence" value="ECO:0007669"/>
    <property type="project" value="InterPro"/>
</dbReference>
<dbReference type="GO" id="GO:0009252">
    <property type="term" value="P:peptidoglycan biosynthetic process"/>
    <property type="evidence" value="ECO:0007669"/>
    <property type="project" value="TreeGrafter"/>
</dbReference>
<dbReference type="GO" id="GO:0006048">
    <property type="term" value="P:UDP-N-acetylglucosamine biosynthetic process"/>
    <property type="evidence" value="ECO:0007669"/>
    <property type="project" value="TreeGrafter"/>
</dbReference>
<dbReference type="CDD" id="cd05802">
    <property type="entry name" value="GlmM"/>
    <property type="match status" value="1"/>
</dbReference>
<dbReference type="FunFam" id="3.30.310.50:FF:000001">
    <property type="entry name" value="Phosphoglucosamine mutase"/>
    <property type="match status" value="1"/>
</dbReference>
<dbReference type="FunFam" id="3.40.120.10:FF:000001">
    <property type="entry name" value="Phosphoglucosamine mutase"/>
    <property type="match status" value="1"/>
</dbReference>
<dbReference type="FunFam" id="3.40.120.10:FF:000002">
    <property type="entry name" value="Phosphoglucosamine mutase"/>
    <property type="match status" value="1"/>
</dbReference>
<dbReference type="Gene3D" id="3.40.120.10">
    <property type="entry name" value="Alpha-D-Glucose-1,6-Bisphosphate, subunit A, domain 3"/>
    <property type="match status" value="3"/>
</dbReference>
<dbReference type="Gene3D" id="3.30.310.50">
    <property type="entry name" value="Alpha-D-phosphohexomutase, C-terminal domain"/>
    <property type="match status" value="1"/>
</dbReference>
<dbReference type="HAMAP" id="MF_01554_B">
    <property type="entry name" value="GlmM_B"/>
    <property type="match status" value="1"/>
</dbReference>
<dbReference type="InterPro" id="IPR005844">
    <property type="entry name" value="A-D-PHexomutase_a/b/a-I"/>
</dbReference>
<dbReference type="InterPro" id="IPR016055">
    <property type="entry name" value="A-D-PHexomutase_a/b/a-I/II/III"/>
</dbReference>
<dbReference type="InterPro" id="IPR005845">
    <property type="entry name" value="A-D-PHexomutase_a/b/a-II"/>
</dbReference>
<dbReference type="InterPro" id="IPR005846">
    <property type="entry name" value="A-D-PHexomutase_a/b/a-III"/>
</dbReference>
<dbReference type="InterPro" id="IPR005843">
    <property type="entry name" value="A-D-PHexomutase_C"/>
</dbReference>
<dbReference type="InterPro" id="IPR036900">
    <property type="entry name" value="A-D-PHexomutase_C_sf"/>
</dbReference>
<dbReference type="InterPro" id="IPR016066">
    <property type="entry name" value="A-D-PHexomutase_CS"/>
</dbReference>
<dbReference type="InterPro" id="IPR005841">
    <property type="entry name" value="Alpha-D-phosphohexomutase_SF"/>
</dbReference>
<dbReference type="InterPro" id="IPR006352">
    <property type="entry name" value="GlmM_bact"/>
</dbReference>
<dbReference type="InterPro" id="IPR050060">
    <property type="entry name" value="Phosphoglucosamine_mutase"/>
</dbReference>
<dbReference type="NCBIfam" id="TIGR01455">
    <property type="entry name" value="glmM"/>
    <property type="match status" value="1"/>
</dbReference>
<dbReference type="NCBIfam" id="NF008139">
    <property type="entry name" value="PRK10887.1"/>
    <property type="match status" value="1"/>
</dbReference>
<dbReference type="PANTHER" id="PTHR42946:SF1">
    <property type="entry name" value="PHOSPHOGLUCOMUTASE (ALPHA-D-GLUCOSE-1,6-BISPHOSPHATE-DEPENDENT)"/>
    <property type="match status" value="1"/>
</dbReference>
<dbReference type="PANTHER" id="PTHR42946">
    <property type="entry name" value="PHOSPHOHEXOSE MUTASE"/>
    <property type="match status" value="1"/>
</dbReference>
<dbReference type="Pfam" id="PF02878">
    <property type="entry name" value="PGM_PMM_I"/>
    <property type="match status" value="1"/>
</dbReference>
<dbReference type="Pfam" id="PF02879">
    <property type="entry name" value="PGM_PMM_II"/>
    <property type="match status" value="1"/>
</dbReference>
<dbReference type="Pfam" id="PF02880">
    <property type="entry name" value="PGM_PMM_III"/>
    <property type="match status" value="1"/>
</dbReference>
<dbReference type="Pfam" id="PF00408">
    <property type="entry name" value="PGM_PMM_IV"/>
    <property type="match status" value="1"/>
</dbReference>
<dbReference type="PRINTS" id="PR00509">
    <property type="entry name" value="PGMPMM"/>
</dbReference>
<dbReference type="SUPFAM" id="SSF55957">
    <property type="entry name" value="Phosphoglucomutase, C-terminal domain"/>
    <property type="match status" value="1"/>
</dbReference>
<dbReference type="SUPFAM" id="SSF53738">
    <property type="entry name" value="Phosphoglucomutase, first 3 domains"/>
    <property type="match status" value="3"/>
</dbReference>
<dbReference type="PROSITE" id="PS00710">
    <property type="entry name" value="PGM_PMM"/>
    <property type="match status" value="1"/>
</dbReference>
<protein>
    <recommendedName>
        <fullName evidence="1">Phosphoglucosamine mutase</fullName>
        <ecNumber evidence="1">5.4.2.10</ecNumber>
    </recommendedName>
</protein>
<accession>B0UTS2</accession>
<reference key="1">
    <citation type="submission" date="2008-02" db="EMBL/GenBank/DDBJ databases">
        <title>Complete sequence of Haemophilus somnus 2336.</title>
        <authorList>
            <consortium name="US DOE Joint Genome Institute"/>
            <person name="Siddaramappa S."/>
            <person name="Duncan A.J."/>
            <person name="Challacombe J.F."/>
            <person name="Rainey D."/>
            <person name="Gillaspy A.F."/>
            <person name="Carson M."/>
            <person name="Gipson J."/>
            <person name="Gipson M."/>
            <person name="Bruce D."/>
            <person name="Detter J.C."/>
            <person name="Han C.S."/>
            <person name="Land M."/>
            <person name="Tapia R."/>
            <person name="Thompson L.S."/>
            <person name="Orvis J."/>
            <person name="Zaitshik J."/>
            <person name="Barnes G."/>
            <person name="Brettin T.S."/>
            <person name="Dyer D.W."/>
            <person name="Inzana T.J."/>
        </authorList>
    </citation>
    <scope>NUCLEOTIDE SEQUENCE [LARGE SCALE GENOMIC DNA]</scope>
    <source>
        <strain>2336</strain>
    </source>
</reference>
<feature type="chain" id="PRO_1000087767" description="Phosphoglucosamine mutase">
    <location>
        <begin position="1"/>
        <end position="444"/>
    </location>
</feature>
<feature type="active site" description="Phosphoserine intermediate" evidence="1">
    <location>
        <position position="102"/>
    </location>
</feature>
<feature type="binding site" description="via phosphate group" evidence="1">
    <location>
        <position position="102"/>
    </location>
    <ligand>
        <name>Mg(2+)</name>
        <dbReference type="ChEBI" id="CHEBI:18420"/>
    </ligand>
</feature>
<feature type="binding site" evidence="1">
    <location>
        <position position="241"/>
    </location>
    <ligand>
        <name>Mg(2+)</name>
        <dbReference type="ChEBI" id="CHEBI:18420"/>
    </ligand>
</feature>
<feature type="binding site" evidence="1">
    <location>
        <position position="243"/>
    </location>
    <ligand>
        <name>Mg(2+)</name>
        <dbReference type="ChEBI" id="CHEBI:18420"/>
    </ligand>
</feature>
<feature type="binding site" evidence="1">
    <location>
        <position position="245"/>
    </location>
    <ligand>
        <name>Mg(2+)</name>
        <dbReference type="ChEBI" id="CHEBI:18420"/>
    </ligand>
</feature>
<feature type="modified residue" description="Phosphoserine" evidence="1">
    <location>
        <position position="102"/>
    </location>
</feature>
<proteinExistence type="inferred from homology"/>
<evidence type="ECO:0000255" key="1">
    <source>
        <dbReference type="HAMAP-Rule" id="MF_01554"/>
    </source>
</evidence>
<sequence>MAERKYFGTDGVRGKVGSYPITPDFVLKLGWAAGKVLATQGTGKVLIGKDTRISGYMLESALEAGLAAAGLSAAFTGPMPTPAIAYLTRTFRSEAGIVISASHNPFYDNGIKFFSAQGTKLPDDVEEAIEAMLEQPMDCVESAKLGRASRINDAAGRYIEFCKSTFPAHLSLDKYKIVVDCANGATYHIAPNVMRELGAEVIEIGTQPDGMNINENCGATDIKALQNQVLETKADIGLAYDGDGDRLIMVDHFGNKVDGDQILFIIAREALRSGNLKGGVVGTLMSNMSLELALKQLGIPFVRANVGDRYVLEKMQEYNWILGGENSGHIIIADKNTTGDGVIASLAVLAAMVQHKLSLNELASAVKLFPQVLINVRFAGGANPLESDAVKAVATEVEKQLAGKGRILLRKSGTEPLIRVMVECEDAELAQLSAEKIAEAVRSN</sequence>
<organism>
    <name type="scientific">Histophilus somni (strain 2336)</name>
    <name type="common">Haemophilus somnus</name>
    <dbReference type="NCBI Taxonomy" id="228400"/>
    <lineage>
        <taxon>Bacteria</taxon>
        <taxon>Pseudomonadati</taxon>
        <taxon>Pseudomonadota</taxon>
        <taxon>Gammaproteobacteria</taxon>
        <taxon>Pasteurellales</taxon>
        <taxon>Pasteurellaceae</taxon>
        <taxon>Histophilus</taxon>
    </lineage>
</organism>